<dbReference type="EMBL" id="AE015925">
    <property type="protein sequence ID" value="AAP04797.1"/>
    <property type="molecule type" value="Genomic_DNA"/>
</dbReference>
<dbReference type="RefSeq" id="WP_011006018.1">
    <property type="nucleotide sequence ID" value="NC_003361.3"/>
</dbReference>
<dbReference type="SMR" id="Q824U4"/>
<dbReference type="STRING" id="227941.CCA_00045"/>
<dbReference type="KEGG" id="cca:CCA_00045"/>
<dbReference type="eggNOG" id="COG0264">
    <property type="taxonomic scope" value="Bacteria"/>
</dbReference>
<dbReference type="HOGENOM" id="CLU_047155_0_0_0"/>
<dbReference type="OrthoDB" id="9808348at2"/>
<dbReference type="Proteomes" id="UP000002193">
    <property type="component" value="Chromosome"/>
</dbReference>
<dbReference type="GO" id="GO:0005737">
    <property type="term" value="C:cytoplasm"/>
    <property type="evidence" value="ECO:0007669"/>
    <property type="project" value="UniProtKB-SubCell"/>
</dbReference>
<dbReference type="GO" id="GO:0003746">
    <property type="term" value="F:translation elongation factor activity"/>
    <property type="evidence" value="ECO:0007669"/>
    <property type="project" value="UniProtKB-UniRule"/>
</dbReference>
<dbReference type="CDD" id="cd14275">
    <property type="entry name" value="UBA_EF-Ts"/>
    <property type="match status" value="1"/>
</dbReference>
<dbReference type="FunFam" id="1.10.286.20:FF:000001">
    <property type="entry name" value="Elongation factor Ts"/>
    <property type="match status" value="1"/>
</dbReference>
<dbReference type="FunFam" id="1.10.8.10:FF:000001">
    <property type="entry name" value="Elongation factor Ts"/>
    <property type="match status" value="1"/>
</dbReference>
<dbReference type="Gene3D" id="1.10.286.20">
    <property type="match status" value="1"/>
</dbReference>
<dbReference type="Gene3D" id="1.10.8.10">
    <property type="entry name" value="DNA helicase RuvA subunit, C-terminal domain"/>
    <property type="match status" value="1"/>
</dbReference>
<dbReference type="Gene3D" id="3.30.479.20">
    <property type="entry name" value="Elongation factor Ts, dimerisation domain"/>
    <property type="match status" value="2"/>
</dbReference>
<dbReference type="HAMAP" id="MF_00050">
    <property type="entry name" value="EF_Ts"/>
    <property type="match status" value="1"/>
</dbReference>
<dbReference type="InterPro" id="IPR036402">
    <property type="entry name" value="EF-Ts_dimer_sf"/>
</dbReference>
<dbReference type="InterPro" id="IPR001816">
    <property type="entry name" value="Transl_elong_EFTs/EF1B"/>
</dbReference>
<dbReference type="InterPro" id="IPR014039">
    <property type="entry name" value="Transl_elong_EFTs/EF1B_dimer"/>
</dbReference>
<dbReference type="InterPro" id="IPR018101">
    <property type="entry name" value="Transl_elong_Ts_CS"/>
</dbReference>
<dbReference type="InterPro" id="IPR009060">
    <property type="entry name" value="UBA-like_sf"/>
</dbReference>
<dbReference type="NCBIfam" id="TIGR00116">
    <property type="entry name" value="tsf"/>
    <property type="match status" value="1"/>
</dbReference>
<dbReference type="PANTHER" id="PTHR11741">
    <property type="entry name" value="ELONGATION FACTOR TS"/>
    <property type="match status" value="1"/>
</dbReference>
<dbReference type="PANTHER" id="PTHR11741:SF0">
    <property type="entry name" value="ELONGATION FACTOR TS, MITOCHONDRIAL"/>
    <property type="match status" value="1"/>
</dbReference>
<dbReference type="Pfam" id="PF00889">
    <property type="entry name" value="EF_TS"/>
    <property type="match status" value="1"/>
</dbReference>
<dbReference type="SUPFAM" id="SSF54713">
    <property type="entry name" value="Elongation factor Ts (EF-Ts), dimerisation domain"/>
    <property type="match status" value="1"/>
</dbReference>
<dbReference type="SUPFAM" id="SSF46934">
    <property type="entry name" value="UBA-like"/>
    <property type="match status" value="1"/>
</dbReference>
<dbReference type="PROSITE" id="PS01126">
    <property type="entry name" value="EF_TS_1"/>
    <property type="match status" value="1"/>
</dbReference>
<dbReference type="PROSITE" id="PS01127">
    <property type="entry name" value="EF_TS_2"/>
    <property type="match status" value="1"/>
</dbReference>
<gene>
    <name evidence="1" type="primary">tsf</name>
    <name type="ordered locus">CCA_00045</name>
</gene>
<comment type="function">
    <text evidence="1">Associates with the EF-Tu.GDP complex and induces the exchange of GDP to GTP. It remains bound to the aminoacyl-tRNA.EF-Tu.GTP complex up to the GTP hydrolysis stage on the ribosome.</text>
</comment>
<comment type="subcellular location">
    <subcellularLocation>
        <location evidence="1">Cytoplasm</location>
    </subcellularLocation>
</comment>
<comment type="similarity">
    <text evidence="1">Belongs to the EF-Ts family.</text>
</comment>
<keyword id="KW-0963">Cytoplasm</keyword>
<keyword id="KW-0251">Elongation factor</keyword>
<keyword id="KW-0648">Protein biosynthesis</keyword>
<protein>
    <recommendedName>
        <fullName evidence="1">Elongation factor Ts</fullName>
        <shortName evidence="1">EF-Ts</shortName>
    </recommendedName>
</protein>
<sequence length="282" mass="30478">MSNFSMETLKLLRQQTGVGLTKCKEALAECNGNLEEAVVHLRKLGLASASKKEHRETKEGVIAAKSDARGTAVVEVNVETDFVANNAVFRTFVDGLVEDVLNHKVNSVDALLPLTSSQDASLTIDELRAVTMQTVGENIRISRIKYLPKTTEESVGIYSHGNGKAVSVTVLSGVADKESLAKDISMHIVAAQPLFLNKESVPADALEREKEVISSQVQGKPQAVIDKIISGKLGTFFQDVCLLEQAFIKNPDITIQGLVDDASKTSGNSVEVKEFILWKIGA</sequence>
<name>EFTS_CHLCV</name>
<organism>
    <name type="scientific">Chlamydia caviae (strain ATCC VR-813 / DSM 19441 / 03DC25 / GPIC)</name>
    <name type="common">Chlamydophila caviae</name>
    <dbReference type="NCBI Taxonomy" id="227941"/>
    <lineage>
        <taxon>Bacteria</taxon>
        <taxon>Pseudomonadati</taxon>
        <taxon>Chlamydiota</taxon>
        <taxon>Chlamydiia</taxon>
        <taxon>Chlamydiales</taxon>
        <taxon>Chlamydiaceae</taxon>
        <taxon>Chlamydia/Chlamydophila group</taxon>
        <taxon>Chlamydia</taxon>
    </lineage>
</organism>
<proteinExistence type="inferred from homology"/>
<accession>Q824U4</accession>
<feature type="chain" id="PRO_0000161101" description="Elongation factor Ts">
    <location>
        <begin position="1"/>
        <end position="282"/>
    </location>
</feature>
<feature type="region of interest" description="Involved in Mg(2+) ion dislocation from EF-Tu" evidence="1">
    <location>
        <begin position="80"/>
        <end position="83"/>
    </location>
</feature>
<reference key="1">
    <citation type="journal article" date="2003" name="Nucleic Acids Res.">
        <title>Genome sequence of Chlamydophila caviae (Chlamydia psittaci GPIC): examining the role of niche-specific genes in the evolution of the Chlamydiaceae.</title>
        <authorList>
            <person name="Read T.D."/>
            <person name="Myers G.S.A."/>
            <person name="Brunham R.C."/>
            <person name="Nelson W.C."/>
            <person name="Paulsen I.T."/>
            <person name="Heidelberg J.F."/>
            <person name="Holtzapple E.K."/>
            <person name="Khouri H.M."/>
            <person name="Federova N.B."/>
            <person name="Carty H.A."/>
            <person name="Umayam L.A."/>
            <person name="Haft D.H."/>
            <person name="Peterson J.D."/>
            <person name="Beanan M.J."/>
            <person name="White O."/>
            <person name="Salzberg S.L."/>
            <person name="Hsia R.-C."/>
            <person name="McClarty G."/>
            <person name="Rank R.G."/>
            <person name="Bavoil P.M."/>
            <person name="Fraser C.M."/>
        </authorList>
    </citation>
    <scope>NUCLEOTIDE SEQUENCE [LARGE SCALE GENOMIC DNA]</scope>
    <source>
        <strain>ATCC VR-813 / DSM 19441 / 03DC25 / GPIC</strain>
    </source>
</reference>
<evidence type="ECO:0000255" key="1">
    <source>
        <dbReference type="HAMAP-Rule" id="MF_00050"/>
    </source>
</evidence>